<organism>
    <name type="scientific">Salmonella paratyphi B (strain ATCC BAA-1250 / SPB7)</name>
    <dbReference type="NCBI Taxonomy" id="1016998"/>
    <lineage>
        <taxon>Bacteria</taxon>
        <taxon>Pseudomonadati</taxon>
        <taxon>Pseudomonadota</taxon>
        <taxon>Gammaproteobacteria</taxon>
        <taxon>Enterobacterales</taxon>
        <taxon>Enterobacteriaceae</taxon>
        <taxon>Salmonella</taxon>
    </lineage>
</organism>
<protein>
    <recommendedName>
        <fullName evidence="1">tRNA pseudouridine synthase B</fullName>
        <ecNumber evidence="1">5.4.99.25</ecNumber>
    </recommendedName>
    <alternativeName>
        <fullName evidence="1">tRNA pseudouridine(55) synthase</fullName>
        <shortName evidence="1">Psi55 synthase</shortName>
    </alternativeName>
    <alternativeName>
        <fullName evidence="1">tRNA pseudouridylate synthase</fullName>
    </alternativeName>
    <alternativeName>
        <fullName evidence="1">tRNA-uridine isomerase</fullName>
    </alternativeName>
</protein>
<gene>
    <name evidence="1" type="primary">truB</name>
    <name type="ordered locus">SPAB_04096</name>
</gene>
<evidence type="ECO:0000255" key="1">
    <source>
        <dbReference type="HAMAP-Rule" id="MF_01080"/>
    </source>
</evidence>
<comment type="function">
    <text evidence="1">Responsible for synthesis of pseudouridine from uracil-55 in the psi GC loop of transfer RNAs.</text>
</comment>
<comment type="catalytic activity">
    <reaction evidence="1">
        <text>uridine(55) in tRNA = pseudouridine(55) in tRNA</text>
        <dbReference type="Rhea" id="RHEA:42532"/>
        <dbReference type="Rhea" id="RHEA-COMP:10101"/>
        <dbReference type="Rhea" id="RHEA-COMP:10102"/>
        <dbReference type="ChEBI" id="CHEBI:65314"/>
        <dbReference type="ChEBI" id="CHEBI:65315"/>
        <dbReference type="EC" id="5.4.99.25"/>
    </reaction>
</comment>
<comment type="similarity">
    <text evidence="1">Belongs to the pseudouridine synthase TruB family. Type 1 subfamily.</text>
</comment>
<accession>A9N730</accession>
<proteinExistence type="inferred from homology"/>
<keyword id="KW-0413">Isomerase</keyword>
<keyword id="KW-0819">tRNA processing</keyword>
<feature type="chain" id="PRO_1000084667" description="tRNA pseudouridine synthase B">
    <location>
        <begin position="1"/>
        <end position="314"/>
    </location>
</feature>
<feature type="active site" description="Nucleophile" evidence="1">
    <location>
        <position position="48"/>
    </location>
</feature>
<feature type="binding site" evidence="1">
    <location>
        <position position="43"/>
    </location>
    <ligand>
        <name>substrate</name>
    </ligand>
</feature>
<feature type="binding site" evidence="1">
    <location>
        <position position="76"/>
    </location>
    <ligand>
        <name>substrate</name>
    </ligand>
</feature>
<feature type="binding site" evidence="1">
    <location>
        <position position="179"/>
    </location>
    <ligand>
        <name>substrate</name>
    </ligand>
</feature>
<feature type="binding site" evidence="1">
    <location>
        <position position="200"/>
    </location>
    <ligand>
        <name>substrate</name>
    </ligand>
</feature>
<reference key="1">
    <citation type="submission" date="2007-11" db="EMBL/GenBank/DDBJ databases">
        <authorList>
            <consortium name="The Salmonella enterica serovar Paratyphi B Genome Sequencing Project"/>
            <person name="McClelland M."/>
            <person name="Sanderson E.K."/>
            <person name="Porwollik S."/>
            <person name="Spieth J."/>
            <person name="Clifton W.S."/>
            <person name="Fulton R."/>
            <person name="Cordes M."/>
            <person name="Wollam A."/>
            <person name="Shah N."/>
            <person name="Pepin K."/>
            <person name="Bhonagiri V."/>
            <person name="Nash W."/>
            <person name="Johnson M."/>
            <person name="Thiruvilangam P."/>
            <person name="Wilson R."/>
        </authorList>
    </citation>
    <scope>NUCLEOTIDE SEQUENCE [LARGE SCALE GENOMIC DNA]</scope>
    <source>
        <strain>ATCC BAA-1250 / SPB7</strain>
    </source>
</reference>
<dbReference type="EC" id="5.4.99.25" evidence="1"/>
<dbReference type="EMBL" id="CP000886">
    <property type="protein sequence ID" value="ABX69422.1"/>
    <property type="molecule type" value="Genomic_DNA"/>
</dbReference>
<dbReference type="RefSeq" id="WP_000089673.1">
    <property type="nucleotide sequence ID" value="NC_010102.1"/>
</dbReference>
<dbReference type="SMR" id="A9N730"/>
<dbReference type="KEGG" id="spq:SPAB_04096"/>
<dbReference type="PATRIC" id="fig|1016998.12.peg.3859"/>
<dbReference type="HOGENOM" id="CLU_032087_0_3_6"/>
<dbReference type="BioCyc" id="SENT1016998:SPAB_RS16640-MONOMER"/>
<dbReference type="Proteomes" id="UP000008556">
    <property type="component" value="Chromosome"/>
</dbReference>
<dbReference type="GO" id="GO:0003723">
    <property type="term" value="F:RNA binding"/>
    <property type="evidence" value="ECO:0007669"/>
    <property type="project" value="InterPro"/>
</dbReference>
<dbReference type="GO" id="GO:0160148">
    <property type="term" value="F:tRNA pseudouridine(55) synthase activity"/>
    <property type="evidence" value="ECO:0007669"/>
    <property type="project" value="UniProtKB-EC"/>
</dbReference>
<dbReference type="GO" id="GO:1990481">
    <property type="term" value="P:mRNA pseudouridine synthesis"/>
    <property type="evidence" value="ECO:0007669"/>
    <property type="project" value="TreeGrafter"/>
</dbReference>
<dbReference type="GO" id="GO:0031119">
    <property type="term" value="P:tRNA pseudouridine synthesis"/>
    <property type="evidence" value="ECO:0007669"/>
    <property type="project" value="UniProtKB-UniRule"/>
</dbReference>
<dbReference type="CDD" id="cd02573">
    <property type="entry name" value="PseudoU_synth_EcTruB"/>
    <property type="match status" value="1"/>
</dbReference>
<dbReference type="CDD" id="cd21152">
    <property type="entry name" value="PUA_TruB_bacterial"/>
    <property type="match status" value="1"/>
</dbReference>
<dbReference type="FunFam" id="2.30.130.10:FF:000004">
    <property type="entry name" value="tRNA pseudouridine synthase B"/>
    <property type="match status" value="1"/>
</dbReference>
<dbReference type="FunFam" id="3.30.2350.10:FF:000003">
    <property type="entry name" value="tRNA pseudouridine synthase B"/>
    <property type="match status" value="1"/>
</dbReference>
<dbReference type="Gene3D" id="3.30.2350.10">
    <property type="entry name" value="Pseudouridine synthase"/>
    <property type="match status" value="1"/>
</dbReference>
<dbReference type="Gene3D" id="2.30.130.10">
    <property type="entry name" value="PUA domain"/>
    <property type="match status" value="1"/>
</dbReference>
<dbReference type="HAMAP" id="MF_01080">
    <property type="entry name" value="TruB_bact"/>
    <property type="match status" value="1"/>
</dbReference>
<dbReference type="InterPro" id="IPR020103">
    <property type="entry name" value="PsdUridine_synth_cat_dom_sf"/>
</dbReference>
<dbReference type="InterPro" id="IPR002501">
    <property type="entry name" value="PsdUridine_synth_N"/>
</dbReference>
<dbReference type="InterPro" id="IPR015947">
    <property type="entry name" value="PUA-like_sf"/>
</dbReference>
<dbReference type="InterPro" id="IPR036974">
    <property type="entry name" value="PUA_sf"/>
</dbReference>
<dbReference type="InterPro" id="IPR014780">
    <property type="entry name" value="tRNA_psdUridine_synth_TruB"/>
</dbReference>
<dbReference type="InterPro" id="IPR015240">
    <property type="entry name" value="tRNA_sdUridine_synth_fam1_C"/>
</dbReference>
<dbReference type="InterPro" id="IPR032819">
    <property type="entry name" value="TruB_C"/>
</dbReference>
<dbReference type="NCBIfam" id="TIGR00431">
    <property type="entry name" value="TruB"/>
    <property type="match status" value="1"/>
</dbReference>
<dbReference type="PANTHER" id="PTHR13767:SF2">
    <property type="entry name" value="PSEUDOURIDYLATE SYNTHASE TRUB1"/>
    <property type="match status" value="1"/>
</dbReference>
<dbReference type="PANTHER" id="PTHR13767">
    <property type="entry name" value="TRNA-PSEUDOURIDINE SYNTHASE"/>
    <property type="match status" value="1"/>
</dbReference>
<dbReference type="Pfam" id="PF09157">
    <property type="entry name" value="TruB-C_2"/>
    <property type="match status" value="1"/>
</dbReference>
<dbReference type="Pfam" id="PF16198">
    <property type="entry name" value="TruB_C_2"/>
    <property type="match status" value="1"/>
</dbReference>
<dbReference type="Pfam" id="PF01509">
    <property type="entry name" value="TruB_N"/>
    <property type="match status" value="1"/>
</dbReference>
<dbReference type="SUPFAM" id="SSF55120">
    <property type="entry name" value="Pseudouridine synthase"/>
    <property type="match status" value="1"/>
</dbReference>
<dbReference type="SUPFAM" id="SSF88697">
    <property type="entry name" value="PUA domain-like"/>
    <property type="match status" value="1"/>
</dbReference>
<name>TRUB_SALPB</name>
<sequence length="314" mass="35028">MSRPRRRGRDIHGVLLLDKPQGMSSNDVLQKVKRIYNANRAGHTGALDPLATGMLPICLGEATKFSQYLLDSDKRYRVIARLGQRTDTSDADGQIVQERPVTFSAEQLASALETFRGDIEQIPSMYSALKYQGKKLYEYARQGIEVPREARPITVYELLFIRHEGNELELEVHCSKGTYIRTIIDDLGEKLGCGAHVTYLRRLTVSKYPVDRMVTLEHLQTLVAQAEQQGVPAAQLLDPLLMPMDSPASDYPVVNLPLTSSVYFKNGNPVRTTGAPLKGLVRVTEGEDDKFIGMGEIDDEGRVAPRRLVVDYPA</sequence>